<sequence>MIRGGALTHVALGLTVFLLLAVVHSQEKCSKTCIAQKCNVLGIRYGKYCGIGYFGCPGEPPCDDLDDCCMTHDNCVDLKGMTYVDCHKQFQRCVNELKQSIQESNNQKVGFSKECPYSTVIPTVYRGMNYGIFFSGIGNIIIPKKPASAGPVVEVDLARSKADTKDGLGTNQGPQTKDGSKVSVPMNPSPS</sequence>
<evidence type="ECO:0000250" key="1"/>
<evidence type="ECO:0000255" key="2"/>
<evidence type="ECO:0000255" key="3">
    <source>
        <dbReference type="PROSITE-ProRule" id="PRU10035"/>
    </source>
</evidence>
<evidence type="ECO:0000256" key="4">
    <source>
        <dbReference type="SAM" id="MobiDB-lite"/>
    </source>
</evidence>
<evidence type="ECO:0000269" key="5">
    <source>
    </source>
</evidence>
<evidence type="ECO:0000269" key="6">
    <source>
    </source>
</evidence>
<evidence type="ECO:0000305" key="7"/>
<feature type="signal peptide" evidence="2">
    <location>
        <begin position="1"/>
        <end position="25"/>
    </location>
</feature>
<feature type="chain" id="PRO_0000417564" description="Phospholipase A2-delta">
    <location>
        <begin position="26"/>
        <end position="191"/>
    </location>
</feature>
<feature type="region of interest" description="Disordered" evidence="4">
    <location>
        <begin position="161"/>
        <end position="191"/>
    </location>
</feature>
<feature type="active site" evidence="3">
    <location>
        <position position="72"/>
    </location>
</feature>
<feature type="binding site" evidence="1">
    <location>
        <position position="48"/>
    </location>
    <ligand>
        <name>Ca(2+)</name>
        <dbReference type="ChEBI" id="CHEBI:29108"/>
    </ligand>
</feature>
<feature type="binding site" evidence="1">
    <location>
        <position position="50"/>
    </location>
    <ligand>
        <name>Ca(2+)</name>
        <dbReference type="ChEBI" id="CHEBI:29108"/>
    </ligand>
</feature>
<feature type="binding site" evidence="1">
    <location>
        <position position="53"/>
    </location>
    <ligand>
        <name>Ca(2+)</name>
        <dbReference type="ChEBI" id="CHEBI:29108"/>
    </ligand>
</feature>
<feature type="binding site" evidence="1">
    <location>
        <position position="73"/>
    </location>
    <ligand>
        <name>Ca(2+)</name>
        <dbReference type="ChEBI" id="CHEBI:29108"/>
    </ligand>
</feature>
<feature type="disulfide bond" evidence="1">
    <location>
        <begin position="29"/>
        <end position="56"/>
    </location>
</feature>
<feature type="disulfide bond" evidence="1">
    <location>
        <begin position="33"/>
        <end position="62"/>
    </location>
</feature>
<feature type="disulfide bond" evidence="1">
    <location>
        <begin position="38"/>
        <end position="115"/>
    </location>
</feature>
<feature type="disulfide bond" evidence="1">
    <location>
        <begin position="49"/>
        <end position="69"/>
    </location>
</feature>
<feature type="disulfide bond" evidence="1">
    <location>
        <begin position="68"/>
        <end position="93"/>
    </location>
</feature>
<feature type="disulfide bond" evidence="1">
    <location>
        <begin position="75"/>
        <end position="86"/>
    </location>
</feature>
<protein>
    <recommendedName>
        <fullName>Phospholipase A2-delta</fullName>
        <ecNumber>3.1.1.4</ecNumber>
    </recommendedName>
    <alternativeName>
        <fullName>Secretory phospholipase A2-delta</fullName>
        <shortName>AtsPLA2-delta</shortName>
    </alternativeName>
</protein>
<proteinExistence type="evidence at transcript level"/>
<keyword id="KW-0106">Calcium</keyword>
<keyword id="KW-1015">Disulfide bond</keyword>
<keyword id="KW-0256">Endoplasmic reticulum</keyword>
<keyword id="KW-0378">Hydrolase</keyword>
<keyword id="KW-0442">Lipid degradation</keyword>
<keyword id="KW-0443">Lipid metabolism</keyword>
<keyword id="KW-0479">Metal-binding</keyword>
<keyword id="KW-1185">Reference proteome</keyword>
<keyword id="KW-0964">Secreted</keyword>
<keyword id="KW-0732">Signal</keyword>
<organism>
    <name type="scientific">Arabidopsis thaliana</name>
    <name type="common">Mouse-ear cress</name>
    <dbReference type="NCBI Taxonomy" id="3702"/>
    <lineage>
        <taxon>Eukaryota</taxon>
        <taxon>Viridiplantae</taxon>
        <taxon>Streptophyta</taxon>
        <taxon>Embryophyta</taxon>
        <taxon>Tracheophyta</taxon>
        <taxon>Spermatophyta</taxon>
        <taxon>Magnoliopsida</taxon>
        <taxon>eudicotyledons</taxon>
        <taxon>Gunneridae</taxon>
        <taxon>Pentapetalae</taxon>
        <taxon>rosids</taxon>
        <taxon>malvids</taxon>
        <taxon>Brassicales</taxon>
        <taxon>Brassicaceae</taxon>
        <taxon>Camelineae</taxon>
        <taxon>Arabidopsis</taxon>
    </lineage>
</organism>
<name>PLA2D_ARATH</name>
<reference key="1">
    <citation type="submission" date="2002-09" db="EMBL/GenBank/DDBJ databases">
        <title>Cloning and Characterization of Arabidopsis thaliana putative secretory low molecular weight phospholipase A2 isoforms.</title>
        <authorList>
            <person name="Bahn S.C."/>
            <person name="Kim H.J."/>
            <person name="Lee H.Y."/>
            <person name="Ryu S.B."/>
            <person name="Shin J.S."/>
        </authorList>
    </citation>
    <scope>NUCLEOTIDE SEQUENCE [MRNA]</scope>
</reference>
<reference key="2">
    <citation type="journal article" date="1999" name="Nature">
        <title>Sequence and analysis of chromosome 4 of the plant Arabidopsis thaliana.</title>
        <authorList>
            <person name="Mayer K.F.X."/>
            <person name="Schueller C."/>
            <person name="Wambutt R."/>
            <person name="Murphy G."/>
            <person name="Volckaert G."/>
            <person name="Pohl T."/>
            <person name="Duesterhoeft A."/>
            <person name="Stiekema W."/>
            <person name="Entian K.-D."/>
            <person name="Terryn N."/>
            <person name="Harris B."/>
            <person name="Ansorge W."/>
            <person name="Brandt P."/>
            <person name="Grivell L.A."/>
            <person name="Rieger M."/>
            <person name="Weichselgartner M."/>
            <person name="de Simone V."/>
            <person name="Obermaier B."/>
            <person name="Mache R."/>
            <person name="Mueller M."/>
            <person name="Kreis M."/>
            <person name="Delseny M."/>
            <person name="Puigdomenech P."/>
            <person name="Watson M."/>
            <person name="Schmidtheini T."/>
            <person name="Reichert B."/>
            <person name="Portetelle D."/>
            <person name="Perez-Alonso M."/>
            <person name="Boutry M."/>
            <person name="Bancroft I."/>
            <person name="Vos P."/>
            <person name="Hoheisel J."/>
            <person name="Zimmermann W."/>
            <person name="Wedler H."/>
            <person name="Ridley P."/>
            <person name="Langham S.-A."/>
            <person name="McCullagh B."/>
            <person name="Bilham L."/>
            <person name="Robben J."/>
            <person name="van der Schueren J."/>
            <person name="Grymonprez B."/>
            <person name="Chuang Y.-J."/>
            <person name="Vandenbussche F."/>
            <person name="Braeken M."/>
            <person name="Weltjens I."/>
            <person name="Voet M."/>
            <person name="Bastiaens I."/>
            <person name="Aert R."/>
            <person name="Defoor E."/>
            <person name="Weitzenegger T."/>
            <person name="Bothe G."/>
            <person name="Ramsperger U."/>
            <person name="Hilbert H."/>
            <person name="Braun M."/>
            <person name="Holzer E."/>
            <person name="Brandt A."/>
            <person name="Peters S."/>
            <person name="van Staveren M."/>
            <person name="Dirkse W."/>
            <person name="Mooijman P."/>
            <person name="Klein Lankhorst R."/>
            <person name="Rose M."/>
            <person name="Hauf J."/>
            <person name="Koetter P."/>
            <person name="Berneiser S."/>
            <person name="Hempel S."/>
            <person name="Feldpausch M."/>
            <person name="Lamberth S."/>
            <person name="Van den Daele H."/>
            <person name="De Keyser A."/>
            <person name="Buysshaert C."/>
            <person name="Gielen J."/>
            <person name="Villarroel R."/>
            <person name="De Clercq R."/>
            <person name="van Montagu M."/>
            <person name="Rogers J."/>
            <person name="Cronin A."/>
            <person name="Quail M.A."/>
            <person name="Bray-Allen S."/>
            <person name="Clark L."/>
            <person name="Doggett J."/>
            <person name="Hall S."/>
            <person name="Kay M."/>
            <person name="Lennard N."/>
            <person name="McLay K."/>
            <person name="Mayes R."/>
            <person name="Pettett A."/>
            <person name="Rajandream M.A."/>
            <person name="Lyne M."/>
            <person name="Benes V."/>
            <person name="Rechmann S."/>
            <person name="Borkova D."/>
            <person name="Bloecker H."/>
            <person name="Scharfe M."/>
            <person name="Grimm M."/>
            <person name="Loehnert T.-H."/>
            <person name="Dose S."/>
            <person name="de Haan M."/>
            <person name="Maarse A.C."/>
            <person name="Schaefer M."/>
            <person name="Mueller-Auer S."/>
            <person name="Gabel C."/>
            <person name="Fuchs M."/>
            <person name="Fartmann B."/>
            <person name="Granderath K."/>
            <person name="Dauner D."/>
            <person name="Herzl A."/>
            <person name="Neumann S."/>
            <person name="Argiriou A."/>
            <person name="Vitale D."/>
            <person name="Liguori R."/>
            <person name="Piravandi E."/>
            <person name="Massenet O."/>
            <person name="Quigley F."/>
            <person name="Clabauld G."/>
            <person name="Muendlein A."/>
            <person name="Felber R."/>
            <person name="Schnabl S."/>
            <person name="Hiller R."/>
            <person name="Schmidt W."/>
            <person name="Lecharny A."/>
            <person name="Aubourg S."/>
            <person name="Chefdor F."/>
            <person name="Cooke R."/>
            <person name="Berger C."/>
            <person name="Monfort A."/>
            <person name="Casacuberta E."/>
            <person name="Gibbons T."/>
            <person name="Weber N."/>
            <person name="Vandenbol M."/>
            <person name="Bargues M."/>
            <person name="Terol J."/>
            <person name="Torres A."/>
            <person name="Perez-Perez A."/>
            <person name="Purnelle B."/>
            <person name="Bent E."/>
            <person name="Johnson S."/>
            <person name="Tacon D."/>
            <person name="Jesse T."/>
            <person name="Heijnen L."/>
            <person name="Schwarz S."/>
            <person name="Scholler P."/>
            <person name="Heber S."/>
            <person name="Francs P."/>
            <person name="Bielke C."/>
            <person name="Frishman D."/>
            <person name="Haase D."/>
            <person name="Lemcke K."/>
            <person name="Mewes H.-W."/>
            <person name="Stocker S."/>
            <person name="Zaccaria P."/>
            <person name="Bevan M."/>
            <person name="Wilson R.K."/>
            <person name="de la Bastide M."/>
            <person name="Habermann K."/>
            <person name="Parnell L."/>
            <person name="Dedhia N."/>
            <person name="Gnoj L."/>
            <person name="Schutz K."/>
            <person name="Huang E."/>
            <person name="Spiegel L."/>
            <person name="Sekhon M."/>
            <person name="Murray J."/>
            <person name="Sheet P."/>
            <person name="Cordes M."/>
            <person name="Abu-Threideh J."/>
            <person name="Stoneking T."/>
            <person name="Kalicki J."/>
            <person name="Graves T."/>
            <person name="Harmon G."/>
            <person name="Edwards J."/>
            <person name="Latreille P."/>
            <person name="Courtney L."/>
            <person name="Cloud J."/>
            <person name="Abbott A."/>
            <person name="Scott K."/>
            <person name="Johnson D."/>
            <person name="Minx P."/>
            <person name="Bentley D."/>
            <person name="Fulton B."/>
            <person name="Miller N."/>
            <person name="Greco T."/>
            <person name="Kemp K."/>
            <person name="Kramer J."/>
            <person name="Fulton L."/>
            <person name="Mardis E."/>
            <person name="Dante M."/>
            <person name="Pepin K."/>
            <person name="Hillier L.W."/>
            <person name="Nelson J."/>
            <person name="Spieth J."/>
            <person name="Ryan E."/>
            <person name="Andrews S."/>
            <person name="Geisel C."/>
            <person name="Layman D."/>
            <person name="Du H."/>
            <person name="Ali J."/>
            <person name="Berghoff A."/>
            <person name="Jones K."/>
            <person name="Drone K."/>
            <person name="Cotton M."/>
            <person name="Joshu C."/>
            <person name="Antonoiu B."/>
            <person name="Zidanic M."/>
            <person name="Strong C."/>
            <person name="Sun H."/>
            <person name="Lamar B."/>
            <person name="Yordan C."/>
            <person name="Ma P."/>
            <person name="Zhong J."/>
            <person name="Preston R."/>
            <person name="Vil D."/>
            <person name="Shekher M."/>
            <person name="Matero A."/>
            <person name="Shah R."/>
            <person name="Swaby I.K."/>
            <person name="O'Shaughnessy A."/>
            <person name="Rodriguez M."/>
            <person name="Hoffman J."/>
            <person name="Till S."/>
            <person name="Granat S."/>
            <person name="Shohdy N."/>
            <person name="Hasegawa A."/>
            <person name="Hameed A."/>
            <person name="Lodhi M."/>
            <person name="Johnson A."/>
            <person name="Chen E."/>
            <person name="Marra M.A."/>
            <person name="Martienssen R."/>
            <person name="McCombie W.R."/>
        </authorList>
    </citation>
    <scope>NUCLEOTIDE SEQUENCE [LARGE SCALE GENOMIC DNA]</scope>
    <source>
        <strain>cv. Columbia</strain>
    </source>
</reference>
<reference key="3">
    <citation type="journal article" date="2017" name="Plant J.">
        <title>Araport11: a complete reannotation of the Arabidopsis thaliana reference genome.</title>
        <authorList>
            <person name="Cheng C.Y."/>
            <person name="Krishnakumar V."/>
            <person name="Chan A.P."/>
            <person name="Thibaud-Nissen F."/>
            <person name="Schobel S."/>
            <person name="Town C.D."/>
        </authorList>
    </citation>
    <scope>GENOME REANNOTATION</scope>
    <source>
        <strain>cv. Columbia</strain>
    </source>
</reference>
<reference key="4">
    <citation type="submission" date="2009-03" db="EMBL/GenBank/DDBJ databases">
        <title>ORF cloning and analysis of Arabidopsis transcription factor genes.</title>
        <authorList>
            <person name="Fujita M."/>
            <person name="Mizukado S."/>
            <person name="Seki M."/>
            <person name="Shinozaki K."/>
            <person name="Mitsuda N."/>
            <person name="Takiguchi Y."/>
            <person name="Takagi M."/>
        </authorList>
    </citation>
    <scope>NUCLEOTIDE SEQUENCE [LARGE SCALE MRNA]</scope>
</reference>
<reference key="5">
    <citation type="journal article" date="2004" name="Trends Plant Sci.">
        <title>Phospholipid-derived signaling mediated by phospholipase A in plants.</title>
        <authorList>
            <person name="Ryu S.B."/>
        </authorList>
    </citation>
    <scope>GENE FAMILY</scope>
    <scope>NOMENCLATURE</scope>
</reference>
<reference key="6">
    <citation type="journal article" date="2005" name="Prog. Lipid Res.">
        <title>Multiple forms of secretory phospholipase A2 in plants.</title>
        <authorList>
            <person name="Lee H.Y."/>
            <person name="Bahn S.C."/>
            <person name="Shin J.S."/>
            <person name="Hwang I."/>
            <person name="Back K."/>
            <person name="Doelling J.H."/>
            <person name="Ryu S.B."/>
        </authorList>
    </citation>
    <scope>TISSUE SPECIFICITY</scope>
</reference>
<reference key="7">
    <citation type="journal article" date="2011" name="Plant Cell">
        <title>Endoplasmic reticulum- and Golgi-localized phospholipase A2 plays critical roles in Arabidopsis pollen development and germination.</title>
        <authorList>
            <person name="Kim H.J."/>
            <person name="Ok S.H."/>
            <person name="Bahn S.C."/>
            <person name="Jang J."/>
            <person name="Oh S.A."/>
            <person name="Park S.K."/>
            <person name="Twell D."/>
            <person name="Ryu S.B."/>
            <person name="Shin J.S."/>
        </authorList>
    </citation>
    <scope>FUNCTION</scope>
    <scope>TISSUE SPECIFICITY</scope>
    <scope>SUBCELLULAR LOCATION</scope>
    <scope>DEVELOPMENTAL STAGE</scope>
</reference>
<gene>
    <name type="primary">PLA2-DELTA</name>
    <name type="ordered locus">At4g29470</name>
    <name type="ORF">F17A13.290</name>
</gene>
<comment type="function">
    <text evidence="6">PA2 catalyzes the calcium-dependent hydrolysis of the 2-acyl groups in 3-sn-phosphoglycerides. Releases lysophospholipids (LPLs) and free fatty acids (FFAs) from membrane phospholipids in response to hormones and other external stimuli. Plays a role in pollen development and germination and tube growth.</text>
</comment>
<comment type="catalytic activity">
    <reaction evidence="3">
        <text>a 1,2-diacyl-sn-glycero-3-phosphocholine + H2O = a 1-acyl-sn-glycero-3-phosphocholine + a fatty acid + H(+)</text>
        <dbReference type="Rhea" id="RHEA:15801"/>
        <dbReference type="ChEBI" id="CHEBI:15377"/>
        <dbReference type="ChEBI" id="CHEBI:15378"/>
        <dbReference type="ChEBI" id="CHEBI:28868"/>
        <dbReference type="ChEBI" id="CHEBI:57643"/>
        <dbReference type="ChEBI" id="CHEBI:58168"/>
        <dbReference type="EC" id="3.1.1.4"/>
    </reaction>
</comment>
<comment type="cofactor">
    <cofactor>
        <name>Ca(2+)</name>
        <dbReference type="ChEBI" id="CHEBI:29108"/>
    </cofactor>
    <text>Binds 1 Ca(2+) ion per subunit.</text>
</comment>
<comment type="subcellular location">
    <subcellularLocation>
        <location evidence="1">Secreted</location>
    </subcellularLocation>
    <subcellularLocation>
        <location evidence="6">Endoplasmic reticulum</location>
    </subcellularLocation>
</comment>
<comment type="tissue specificity">
    <text evidence="5 6">Specifically expressed in flowers but at a low level. Detected specifically in the pollen.</text>
</comment>
<comment type="developmental stage">
    <text evidence="6">Expressed during pollen germination and tube growth.</text>
</comment>
<comment type="miscellaneous">
    <text>The enzyme has a slight preference for phosphatidylethanolamine over phosphatidylcholine.</text>
</comment>
<comment type="similarity">
    <text evidence="7">Belongs to the phospholipase A2 family.</text>
</comment>
<comment type="sequence caution" evidence="7">
    <conflict type="erroneous gene model prediction">
        <sequence resource="EMBL-CDS" id="CAB79705"/>
    </conflict>
</comment>
<dbReference type="EC" id="3.1.1.4"/>
<dbReference type="EMBL" id="AY148347">
    <property type="protein sequence ID" value="AAN63045.1"/>
    <property type="molecule type" value="mRNA"/>
</dbReference>
<dbReference type="EMBL" id="AL161575">
    <property type="protein sequence ID" value="CAB79705.1"/>
    <property type="status" value="ALT_SEQ"/>
    <property type="molecule type" value="Genomic_DNA"/>
</dbReference>
<dbReference type="EMBL" id="CP002687">
    <property type="protein sequence ID" value="AEE85635.1"/>
    <property type="molecule type" value="Genomic_DNA"/>
</dbReference>
<dbReference type="EMBL" id="CP002687">
    <property type="protein sequence ID" value="ANM66586.1"/>
    <property type="molecule type" value="Genomic_DNA"/>
</dbReference>
<dbReference type="EMBL" id="AB493706">
    <property type="protein sequence ID" value="BAH30544.1"/>
    <property type="molecule type" value="mRNA"/>
</dbReference>
<dbReference type="PIR" id="H85343">
    <property type="entry name" value="H85343"/>
</dbReference>
<dbReference type="RefSeq" id="NP_001328472.1">
    <property type="nucleotide sequence ID" value="NM_001341968.1"/>
</dbReference>
<dbReference type="RefSeq" id="NP_194676.2">
    <property type="nucleotide sequence ID" value="NM_119092.3"/>
</dbReference>
<dbReference type="SMR" id="Q8GV50"/>
<dbReference type="FunCoup" id="Q8GV50">
    <property type="interactions" value="46"/>
</dbReference>
<dbReference type="STRING" id="3702.Q8GV50"/>
<dbReference type="PaxDb" id="3702-AT4G29470.1"/>
<dbReference type="ProteomicsDB" id="235064"/>
<dbReference type="EnsemblPlants" id="AT4G29470.1">
    <property type="protein sequence ID" value="AT4G29470.1"/>
    <property type="gene ID" value="AT4G29470"/>
</dbReference>
<dbReference type="EnsemblPlants" id="AT4G29470.2">
    <property type="protein sequence ID" value="AT4G29470.2"/>
    <property type="gene ID" value="AT4G29470"/>
</dbReference>
<dbReference type="GeneID" id="829068"/>
<dbReference type="Gramene" id="AT4G29470.1">
    <property type="protein sequence ID" value="AT4G29470.1"/>
    <property type="gene ID" value="AT4G29470"/>
</dbReference>
<dbReference type="Gramene" id="AT4G29470.2">
    <property type="protein sequence ID" value="AT4G29470.2"/>
    <property type="gene ID" value="AT4G29470"/>
</dbReference>
<dbReference type="KEGG" id="ath:AT4G29470"/>
<dbReference type="Araport" id="AT4G29470"/>
<dbReference type="TAIR" id="AT4G29470">
    <property type="gene designation" value="PLA2-DELTA"/>
</dbReference>
<dbReference type="eggNOG" id="ENOG502RZIE">
    <property type="taxonomic scope" value="Eukaryota"/>
</dbReference>
<dbReference type="HOGENOM" id="CLU_115623_1_0_1"/>
<dbReference type="InParanoid" id="Q8GV50"/>
<dbReference type="OMA" id="HKQFQRC"/>
<dbReference type="OrthoDB" id="566013at2759"/>
<dbReference type="PhylomeDB" id="Q8GV50"/>
<dbReference type="BioCyc" id="ARA:AT4G29470-MONOMER"/>
<dbReference type="PRO" id="PR:Q8GV50"/>
<dbReference type="Proteomes" id="UP000006548">
    <property type="component" value="Chromosome 4"/>
</dbReference>
<dbReference type="ExpressionAtlas" id="Q8GV50">
    <property type="expression patterns" value="baseline and differential"/>
</dbReference>
<dbReference type="GO" id="GO:0005783">
    <property type="term" value="C:endoplasmic reticulum"/>
    <property type="evidence" value="ECO:0000314"/>
    <property type="project" value="TAIR"/>
</dbReference>
<dbReference type="GO" id="GO:0005576">
    <property type="term" value="C:extracellular region"/>
    <property type="evidence" value="ECO:0007669"/>
    <property type="project" value="UniProtKB-SubCell"/>
</dbReference>
<dbReference type="GO" id="GO:0046872">
    <property type="term" value="F:metal ion binding"/>
    <property type="evidence" value="ECO:0007669"/>
    <property type="project" value="UniProtKB-KW"/>
</dbReference>
<dbReference type="GO" id="GO:0004623">
    <property type="term" value="F:phospholipase A2 activity"/>
    <property type="evidence" value="ECO:0007669"/>
    <property type="project" value="UniProtKB-EC"/>
</dbReference>
<dbReference type="GO" id="GO:0050482">
    <property type="term" value="P:arachidonate secretion"/>
    <property type="evidence" value="ECO:0007669"/>
    <property type="project" value="InterPro"/>
</dbReference>
<dbReference type="GO" id="GO:0016042">
    <property type="term" value="P:lipid catabolic process"/>
    <property type="evidence" value="ECO:0007669"/>
    <property type="project" value="UniProtKB-KW"/>
</dbReference>
<dbReference type="GO" id="GO:0006644">
    <property type="term" value="P:phospholipid metabolic process"/>
    <property type="evidence" value="ECO:0007669"/>
    <property type="project" value="InterPro"/>
</dbReference>
<dbReference type="GO" id="GO:0009555">
    <property type="term" value="P:pollen development"/>
    <property type="evidence" value="ECO:0000315"/>
    <property type="project" value="TAIR"/>
</dbReference>
<dbReference type="GO" id="GO:0009846">
    <property type="term" value="P:pollen germination"/>
    <property type="evidence" value="ECO:0000314"/>
    <property type="project" value="UniProtKB"/>
</dbReference>
<dbReference type="GO" id="GO:0009860">
    <property type="term" value="P:pollen tube growth"/>
    <property type="evidence" value="ECO:0000314"/>
    <property type="project" value="UniProtKB"/>
</dbReference>
<dbReference type="FunFam" id="1.20.90.10:FF:000005">
    <property type="entry name" value="Secretory phospholipase A2"/>
    <property type="match status" value="1"/>
</dbReference>
<dbReference type="Gene3D" id="1.20.90.10">
    <property type="entry name" value="Phospholipase A2 domain"/>
    <property type="match status" value="1"/>
</dbReference>
<dbReference type="InterPro" id="IPR036444">
    <property type="entry name" value="PLipase_A2_dom_sf"/>
</dbReference>
<dbReference type="InterPro" id="IPR033113">
    <property type="entry name" value="PLipase_A2_His_AS"/>
</dbReference>
<dbReference type="SUPFAM" id="SSF48619">
    <property type="entry name" value="Phospholipase A2, PLA2"/>
    <property type="match status" value="1"/>
</dbReference>
<dbReference type="PROSITE" id="PS00118">
    <property type="entry name" value="PA2_HIS"/>
    <property type="match status" value="1"/>
</dbReference>
<accession>Q8GV50</accession>
<accession>Q9M0D6</accession>